<protein>
    <recommendedName>
        <fullName evidence="2">Type VI secretion system component TssF1</fullName>
    </recommendedName>
</protein>
<reference key="1">
    <citation type="journal article" date="2000" name="Nature">
        <title>Complete genome sequence of Pseudomonas aeruginosa PAO1, an opportunistic pathogen.</title>
        <authorList>
            <person name="Stover C.K."/>
            <person name="Pham X.-Q.T."/>
            <person name="Erwin A.L."/>
            <person name="Mizoguchi S.D."/>
            <person name="Warrener P."/>
            <person name="Hickey M.J."/>
            <person name="Brinkman F.S.L."/>
            <person name="Hufnagle W.O."/>
            <person name="Kowalik D.J."/>
            <person name="Lagrou M."/>
            <person name="Garber R.L."/>
            <person name="Goltry L."/>
            <person name="Tolentino E."/>
            <person name="Westbrock-Wadman S."/>
            <person name="Yuan Y."/>
            <person name="Brody L.L."/>
            <person name="Coulter S.N."/>
            <person name="Folger K.R."/>
            <person name="Kas A."/>
            <person name="Larbig K."/>
            <person name="Lim R.M."/>
            <person name="Smith K.A."/>
            <person name="Spencer D.H."/>
            <person name="Wong G.K.-S."/>
            <person name="Wu Z."/>
            <person name="Paulsen I.T."/>
            <person name="Reizer J."/>
            <person name="Saier M.H. Jr."/>
            <person name="Hancock R.E.W."/>
            <person name="Lory S."/>
            <person name="Olson M.V."/>
        </authorList>
    </citation>
    <scope>NUCLEOTIDE SEQUENCE [LARGE SCALE GENOMIC DNA]</scope>
    <source>
        <strain>ATCC 15692 / DSM 22644 / CIP 104116 / JCM 14847 / LMG 12228 / 1C / PRS 101 / PAO1</strain>
    </source>
</reference>
<reference key="2">
    <citation type="journal article" date="2016" name="EMBO J.">
        <title>TssA forms a gp6-like ring attached to the type VI secretion sheath.</title>
        <authorList>
            <person name="Planamente S."/>
            <person name="Salih O."/>
            <person name="Manoli E."/>
            <person name="Albesa-Jove D."/>
            <person name="Freemont P.S."/>
            <person name="Filloux A."/>
        </authorList>
    </citation>
    <scope>FUNCTION</scope>
    <scope>INTERACTION WITH TSSA1</scope>
</reference>
<gene>
    <name evidence="2" type="primary">tssF1</name>
    <name type="ordered locus">PA0088</name>
</gene>
<organism>
    <name type="scientific">Pseudomonas aeruginosa (strain ATCC 15692 / DSM 22644 / CIP 104116 / JCM 14847 / LMG 12228 / 1C / PRS 101 / PAO1)</name>
    <dbReference type="NCBI Taxonomy" id="208964"/>
    <lineage>
        <taxon>Bacteria</taxon>
        <taxon>Pseudomonadati</taxon>
        <taxon>Pseudomonadota</taxon>
        <taxon>Gammaproteobacteria</taxon>
        <taxon>Pseudomonadales</taxon>
        <taxon>Pseudomonadaceae</taxon>
        <taxon>Pseudomonas</taxon>
    </lineage>
</organism>
<evidence type="ECO:0000269" key="1">
    <source>
    </source>
</evidence>
<evidence type="ECO:0000303" key="2">
    <source>
    </source>
</evidence>
<sequence>MNPRLLEYYNQELQHIRESAAEFAEEFPKIAGRLSLSGFECADPYVERLLEGFAYLTARVQLKLDAEYPTFTHNLLEIAYPHYLAPTPSMTVVQLRPDPNEGALSSGFSIERGASLRGQLGPDDQTACEYRTAHPVTLWPLEVAQADYFGNPAAVLGRLAASEPRAKAGLRIRLRSGAGIPFDSLSLDALPLYLHGADEQPYRLYEQLLGNACAVFVRAPDNAWVERLPTSSLRARGFDDEDALLPVVPRAFQGYRLLQEYFALPARFLFVEFSGLNRALRRCHGEELELVVLFGKHDQRLEGTVDAEQLVPFCTPAINLFPRRCDRIHLSDRVNEHHVIVDRTRPLDFEVHSLQQVSGHGSGPEQPFQPFYAVRDPARYGREQAYFRVRREPRVLSSKQRRKGPRSTYVGSETFVALVDANQAPYRHDLRQLGIAALCTNRDLPLFMPIGAHKSDFTLEDSAPVMQVRCLAGPSRPRASRAHDASAWRLISQLSLNYLSLAERGQGAAALRELLRLYGDSGDPALQLQIEGLREVSSKPCTRRLPMPGPIVFGRGLEITLDFDENAFRGTGVFLLGAVFERFLARYVSINSFTETVLRTGERGEVMRWQAKPGSRPNL</sequence>
<accession>Q9I744</accession>
<feature type="chain" id="PRO_0000449265" description="Type VI secretion system component TssF1">
    <location>
        <begin position="1"/>
        <end position="619"/>
    </location>
</feature>
<proteinExistence type="evidence at protein level"/>
<keyword id="KW-1185">Reference proteome</keyword>
<comment type="function">
    <text evidence="1">Core component of the H1 type VI (H1-T6SS) secretion system that plays a role in the release of toxins targeting both eukaryotic and prokaryotic species.</text>
</comment>
<comment type="subunit">
    <text evidence="1">Interacts with TssA1.</text>
</comment>
<name>TSSF1_PSEAE</name>
<dbReference type="EMBL" id="AE004091">
    <property type="protein sequence ID" value="AAG03478.1"/>
    <property type="molecule type" value="Genomic_DNA"/>
</dbReference>
<dbReference type="PIR" id="E83635">
    <property type="entry name" value="E83635"/>
</dbReference>
<dbReference type="RefSeq" id="NP_248778.1">
    <property type="nucleotide sequence ID" value="NC_002516.2"/>
</dbReference>
<dbReference type="SMR" id="Q9I744"/>
<dbReference type="STRING" id="208964.PA0088"/>
<dbReference type="PaxDb" id="208964-PA0088"/>
<dbReference type="GeneID" id="879483"/>
<dbReference type="KEGG" id="pae:PA0088"/>
<dbReference type="PATRIC" id="fig|208964.12.peg.92"/>
<dbReference type="PseudoCAP" id="PA0088"/>
<dbReference type="HOGENOM" id="CLU_028593_2_0_6"/>
<dbReference type="InParanoid" id="Q9I744"/>
<dbReference type="OrthoDB" id="9763676at2"/>
<dbReference type="PhylomeDB" id="Q9I744"/>
<dbReference type="BioCyc" id="PAER208964:G1FZ6-90-MONOMER"/>
<dbReference type="Proteomes" id="UP000002438">
    <property type="component" value="Chromosome"/>
</dbReference>
<dbReference type="InterPro" id="IPR010272">
    <property type="entry name" value="T6SS_TssF"/>
</dbReference>
<dbReference type="NCBIfam" id="TIGR03359">
    <property type="entry name" value="VI_chp_6"/>
    <property type="match status" value="1"/>
</dbReference>
<dbReference type="PANTHER" id="PTHR35370">
    <property type="entry name" value="CYTOPLASMIC PROTEIN-RELATED-RELATED"/>
    <property type="match status" value="1"/>
</dbReference>
<dbReference type="PANTHER" id="PTHR35370:SF1">
    <property type="entry name" value="TYPE VI SECRETION SYSTEM COMPONENT TSSF1"/>
    <property type="match status" value="1"/>
</dbReference>
<dbReference type="Pfam" id="PF05947">
    <property type="entry name" value="T6SS_TssF"/>
    <property type="match status" value="1"/>
</dbReference>
<dbReference type="PIRSF" id="PIRSF028304">
    <property type="entry name" value="UCP028304"/>
    <property type="match status" value="1"/>
</dbReference>